<organism>
    <name type="scientific">Helicobacter acinonychis (strain Sheeba)</name>
    <dbReference type="NCBI Taxonomy" id="382638"/>
    <lineage>
        <taxon>Bacteria</taxon>
        <taxon>Pseudomonadati</taxon>
        <taxon>Campylobacterota</taxon>
        <taxon>Epsilonproteobacteria</taxon>
        <taxon>Campylobacterales</taxon>
        <taxon>Helicobacteraceae</taxon>
        <taxon>Helicobacter</taxon>
    </lineage>
</organism>
<feature type="chain" id="PRO_0000277680" description="Methionine import ATP-binding protein MetN">
    <location>
        <begin position="1"/>
        <end position="327"/>
    </location>
</feature>
<feature type="domain" description="ABC transporter" evidence="1">
    <location>
        <begin position="3"/>
        <end position="239"/>
    </location>
</feature>
<feature type="binding site" evidence="1">
    <location>
        <begin position="36"/>
        <end position="43"/>
    </location>
    <ligand>
        <name>ATP</name>
        <dbReference type="ChEBI" id="CHEBI:30616"/>
    </ligand>
</feature>
<gene>
    <name evidence="1" type="primary">metN</name>
    <name type="ordered locus">Hac_1683</name>
</gene>
<sequence length="327" mass="36803">MVVELKNIEKIYENGFHALKGVDLELKKGDILGVIGYSGAGKSTLIRLINCLERPSSGEVLVNGVNLLQLKPKELQKARQKIGMIFQHFNLLSAKNVFENVAFALEIAQWEKNKIKSRVHELLELVGLEDKMHFYPKQLSGGQKQRVAIARSLANYPNLLLCDEATSALDSKTTHSILTLLRDIQKKLDLSVVFITHEIEVVKELCNQMCVISNGKIVERGLVEEIFANPKHAVTKELIGIKNEHADKKSQNVYRIVFLGEHLDEPIISNLIRRFKIDVSIISGNIEELTTKDIGYLVVRFLGSIAETQRALEYLNALGLQVEKLKD</sequence>
<comment type="function">
    <text evidence="1">Part of the ABC transporter complex MetNIQ involved in methionine import. Responsible for energy coupling to the transport system.</text>
</comment>
<comment type="catalytic activity">
    <reaction evidence="1">
        <text>L-methionine(out) + ATP + H2O = L-methionine(in) + ADP + phosphate + H(+)</text>
        <dbReference type="Rhea" id="RHEA:29779"/>
        <dbReference type="ChEBI" id="CHEBI:15377"/>
        <dbReference type="ChEBI" id="CHEBI:15378"/>
        <dbReference type="ChEBI" id="CHEBI:30616"/>
        <dbReference type="ChEBI" id="CHEBI:43474"/>
        <dbReference type="ChEBI" id="CHEBI:57844"/>
        <dbReference type="ChEBI" id="CHEBI:456216"/>
        <dbReference type="EC" id="7.4.2.11"/>
    </reaction>
</comment>
<comment type="catalytic activity">
    <reaction evidence="1">
        <text>D-methionine(out) + ATP + H2O = D-methionine(in) + ADP + phosphate + H(+)</text>
        <dbReference type="Rhea" id="RHEA:29767"/>
        <dbReference type="ChEBI" id="CHEBI:15377"/>
        <dbReference type="ChEBI" id="CHEBI:15378"/>
        <dbReference type="ChEBI" id="CHEBI:30616"/>
        <dbReference type="ChEBI" id="CHEBI:43474"/>
        <dbReference type="ChEBI" id="CHEBI:57932"/>
        <dbReference type="ChEBI" id="CHEBI:456216"/>
        <dbReference type="EC" id="7.4.2.11"/>
    </reaction>
</comment>
<comment type="subunit">
    <text evidence="1">The complex is composed of two ATP-binding proteins (MetN), two transmembrane proteins (MetI) and a solute-binding protein (MetQ).</text>
</comment>
<comment type="subcellular location">
    <subcellularLocation>
        <location evidence="1">Cell inner membrane</location>
        <topology evidence="1">Peripheral membrane protein</topology>
    </subcellularLocation>
</comment>
<comment type="similarity">
    <text evidence="1">Belongs to the ABC transporter superfamily. Methionine importer (TC 3.A.1.24) family.</text>
</comment>
<reference key="1">
    <citation type="journal article" date="2006" name="PLoS Genet.">
        <title>Who ate whom? Adaptive Helicobacter genomic changes that accompanied a host jump from early humans to large felines.</title>
        <authorList>
            <person name="Eppinger M."/>
            <person name="Baar C."/>
            <person name="Linz B."/>
            <person name="Raddatz G."/>
            <person name="Lanz C."/>
            <person name="Keller H."/>
            <person name="Morelli G."/>
            <person name="Gressmann H."/>
            <person name="Achtman M."/>
            <person name="Schuster S.C."/>
        </authorList>
    </citation>
    <scope>NUCLEOTIDE SEQUENCE [LARGE SCALE GENOMIC DNA]</scope>
    <source>
        <strain>Sheeba</strain>
    </source>
</reference>
<evidence type="ECO:0000255" key="1">
    <source>
        <dbReference type="HAMAP-Rule" id="MF_01719"/>
    </source>
</evidence>
<protein>
    <recommendedName>
        <fullName evidence="1">Methionine import ATP-binding protein MetN</fullName>
        <ecNumber evidence="1">7.4.2.11</ecNumber>
    </recommendedName>
</protein>
<dbReference type="EC" id="7.4.2.11" evidence="1"/>
<dbReference type="EMBL" id="AM260522">
    <property type="protein sequence ID" value="CAK00386.1"/>
    <property type="molecule type" value="Genomic_DNA"/>
</dbReference>
<dbReference type="RefSeq" id="WP_011578469.1">
    <property type="nucleotide sequence ID" value="NC_008229.1"/>
</dbReference>
<dbReference type="SMR" id="Q17VE0"/>
<dbReference type="STRING" id="382638.Hac_1683"/>
<dbReference type="GeneID" id="31758929"/>
<dbReference type="KEGG" id="hac:Hac_1683"/>
<dbReference type="eggNOG" id="COG1135">
    <property type="taxonomic scope" value="Bacteria"/>
</dbReference>
<dbReference type="HOGENOM" id="CLU_000604_1_3_7"/>
<dbReference type="OrthoDB" id="9814623at2"/>
<dbReference type="BioCyc" id="HACI382638:HAC_RS07155-MONOMER"/>
<dbReference type="Proteomes" id="UP000000775">
    <property type="component" value="Chromosome"/>
</dbReference>
<dbReference type="GO" id="GO:0005886">
    <property type="term" value="C:plasma membrane"/>
    <property type="evidence" value="ECO:0007669"/>
    <property type="project" value="UniProtKB-SubCell"/>
</dbReference>
<dbReference type="GO" id="GO:0033232">
    <property type="term" value="F:ABC-type D-methionine transporter activity"/>
    <property type="evidence" value="ECO:0007669"/>
    <property type="project" value="UniProtKB-EC"/>
</dbReference>
<dbReference type="GO" id="GO:0005524">
    <property type="term" value="F:ATP binding"/>
    <property type="evidence" value="ECO:0007669"/>
    <property type="project" value="UniProtKB-KW"/>
</dbReference>
<dbReference type="GO" id="GO:0016887">
    <property type="term" value="F:ATP hydrolysis activity"/>
    <property type="evidence" value="ECO:0007669"/>
    <property type="project" value="InterPro"/>
</dbReference>
<dbReference type="CDD" id="cd03258">
    <property type="entry name" value="ABC_MetN_methionine_transporter"/>
    <property type="match status" value="1"/>
</dbReference>
<dbReference type="FunFam" id="3.40.50.300:FF:000056">
    <property type="entry name" value="Cell division ATP-binding protein FtsE"/>
    <property type="match status" value="1"/>
</dbReference>
<dbReference type="Gene3D" id="3.30.70.260">
    <property type="match status" value="1"/>
</dbReference>
<dbReference type="Gene3D" id="3.40.50.300">
    <property type="entry name" value="P-loop containing nucleotide triphosphate hydrolases"/>
    <property type="match status" value="1"/>
</dbReference>
<dbReference type="InterPro" id="IPR003593">
    <property type="entry name" value="AAA+_ATPase"/>
</dbReference>
<dbReference type="InterPro" id="IPR003439">
    <property type="entry name" value="ABC_transporter-like_ATP-bd"/>
</dbReference>
<dbReference type="InterPro" id="IPR017871">
    <property type="entry name" value="ABC_transporter-like_CS"/>
</dbReference>
<dbReference type="InterPro" id="IPR045865">
    <property type="entry name" value="ACT-like_dom_sf"/>
</dbReference>
<dbReference type="InterPro" id="IPR041701">
    <property type="entry name" value="MetN_ABC"/>
</dbReference>
<dbReference type="InterPro" id="IPR050086">
    <property type="entry name" value="MetN_ABC_transporter-like"/>
</dbReference>
<dbReference type="InterPro" id="IPR018449">
    <property type="entry name" value="NIL_domain"/>
</dbReference>
<dbReference type="InterPro" id="IPR027417">
    <property type="entry name" value="P-loop_NTPase"/>
</dbReference>
<dbReference type="PANTHER" id="PTHR43166">
    <property type="entry name" value="AMINO ACID IMPORT ATP-BINDING PROTEIN"/>
    <property type="match status" value="1"/>
</dbReference>
<dbReference type="PANTHER" id="PTHR43166:SF30">
    <property type="entry name" value="METHIONINE IMPORT ATP-BINDING PROTEIN METN"/>
    <property type="match status" value="1"/>
</dbReference>
<dbReference type="Pfam" id="PF00005">
    <property type="entry name" value="ABC_tran"/>
    <property type="match status" value="1"/>
</dbReference>
<dbReference type="Pfam" id="PF09383">
    <property type="entry name" value="NIL"/>
    <property type="match status" value="1"/>
</dbReference>
<dbReference type="SMART" id="SM00382">
    <property type="entry name" value="AAA"/>
    <property type="match status" value="1"/>
</dbReference>
<dbReference type="SMART" id="SM00930">
    <property type="entry name" value="NIL"/>
    <property type="match status" value="1"/>
</dbReference>
<dbReference type="SUPFAM" id="SSF55021">
    <property type="entry name" value="ACT-like"/>
    <property type="match status" value="1"/>
</dbReference>
<dbReference type="SUPFAM" id="SSF52540">
    <property type="entry name" value="P-loop containing nucleoside triphosphate hydrolases"/>
    <property type="match status" value="1"/>
</dbReference>
<dbReference type="PROSITE" id="PS00211">
    <property type="entry name" value="ABC_TRANSPORTER_1"/>
    <property type="match status" value="1"/>
</dbReference>
<dbReference type="PROSITE" id="PS50893">
    <property type="entry name" value="ABC_TRANSPORTER_2"/>
    <property type="match status" value="1"/>
</dbReference>
<dbReference type="PROSITE" id="PS51264">
    <property type="entry name" value="METN"/>
    <property type="match status" value="1"/>
</dbReference>
<proteinExistence type="inferred from homology"/>
<name>METN_HELAH</name>
<accession>Q17VE0</accession>
<keyword id="KW-0029">Amino-acid transport</keyword>
<keyword id="KW-0067">ATP-binding</keyword>
<keyword id="KW-0997">Cell inner membrane</keyword>
<keyword id="KW-1003">Cell membrane</keyword>
<keyword id="KW-0472">Membrane</keyword>
<keyword id="KW-0547">Nucleotide-binding</keyword>
<keyword id="KW-1278">Translocase</keyword>
<keyword id="KW-0813">Transport</keyword>